<organism>
    <name type="scientific">Neisseria meningitidis serogroup A / serotype 4A (strain DSM 15465 / Z2491)</name>
    <dbReference type="NCBI Taxonomy" id="122587"/>
    <lineage>
        <taxon>Bacteria</taxon>
        <taxon>Pseudomonadati</taxon>
        <taxon>Pseudomonadota</taxon>
        <taxon>Betaproteobacteria</taxon>
        <taxon>Neisseriales</taxon>
        <taxon>Neisseriaceae</taxon>
        <taxon>Neisseria</taxon>
    </lineage>
</organism>
<evidence type="ECO:0000255" key="1">
    <source>
        <dbReference type="HAMAP-Rule" id="MF_00473"/>
    </source>
</evidence>
<evidence type="ECO:0000305" key="2"/>
<gene>
    <name evidence="1" type="primary">pgi2</name>
    <name type="ordered locus">NMA2154</name>
</gene>
<keyword id="KW-0963">Cytoplasm</keyword>
<keyword id="KW-0312">Gluconeogenesis</keyword>
<keyword id="KW-0324">Glycolysis</keyword>
<keyword id="KW-0413">Isomerase</keyword>
<proteinExistence type="inferred from homology"/>
<dbReference type="EC" id="5.3.1.9" evidence="1"/>
<dbReference type="EMBL" id="AL157959">
    <property type="protein sequence ID" value="CAM09250.1"/>
    <property type="molecule type" value="Genomic_DNA"/>
</dbReference>
<dbReference type="PIR" id="G81787">
    <property type="entry name" value="G81787"/>
</dbReference>
<dbReference type="RefSeq" id="WP_002245857.1">
    <property type="nucleotide sequence ID" value="NC_003116.1"/>
</dbReference>
<dbReference type="SMR" id="Q9JSS6"/>
<dbReference type="EnsemblBacteria" id="CAM09250">
    <property type="protein sequence ID" value="CAM09250"/>
    <property type="gene ID" value="NMA2154"/>
</dbReference>
<dbReference type="KEGG" id="nma:NMA2154"/>
<dbReference type="HOGENOM" id="CLU_017947_3_1_4"/>
<dbReference type="UniPathway" id="UPA00109">
    <property type="reaction ID" value="UER00181"/>
</dbReference>
<dbReference type="UniPathway" id="UPA00138"/>
<dbReference type="Proteomes" id="UP000000626">
    <property type="component" value="Chromosome"/>
</dbReference>
<dbReference type="GO" id="GO:0005829">
    <property type="term" value="C:cytosol"/>
    <property type="evidence" value="ECO:0007669"/>
    <property type="project" value="TreeGrafter"/>
</dbReference>
<dbReference type="GO" id="GO:0097367">
    <property type="term" value="F:carbohydrate derivative binding"/>
    <property type="evidence" value="ECO:0007669"/>
    <property type="project" value="InterPro"/>
</dbReference>
<dbReference type="GO" id="GO:0004347">
    <property type="term" value="F:glucose-6-phosphate isomerase activity"/>
    <property type="evidence" value="ECO:0007669"/>
    <property type="project" value="UniProtKB-UniRule"/>
</dbReference>
<dbReference type="GO" id="GO:0048029">
    <property type="term" value="F:monosaccharide binding"/>
    <property type="evidence" value="ECO:0007669"/>
    <property type="project" value="TreeGrafter"/>
</dbReference>
<dbReference type="GO" id="GO:0006094">
    <property type="term" value="P:gluconeogenesis"/>
    <property type="evidence" value="ECO:0007669"/>
    <property type="project" value="UniProtKB-UniRule"/>
</dbReference>
<dbReference type="GO" id="GO:0051156">
    <property type="term" value="P:glucose 6-phosphate metabolic process"/>
    <property type="evidence" value="ECO:0007669"/>
    <property type="project" value="TreeGrafter"/>
</dbReference>
<dbReference type="GO" id="GO:0006096">
    <property type="term" value="P:glycolytic process"/>
    <property type="evidence" value="ECO:0007669"/>
    <property type="project" value="UniProtKB-UniRule"/>
</dbReference>
<dbReference type="CDD" id="cd05015">
    <property type="entry name" value="SIS_PGI_1"/>
    <property type="match status" value="1"/>
</dbReference>
<dbReference type="CDD" id="cd05016">
    <property type="entry name" value="SIS_PGI_2"/>
    <property type="match status" value="1"/>
</dbReference>
<dbReference type="FunFam" id="1.10.1390.10:FF:000001">
    <property type="entry name" value="Glucose-6-phosphate isomerase"/>
    <property type="match status" value="1"/>
</dbReference>
<dbReference type="Gene3D" id="1.10.1390.10">
    <property type="match status" value="1"/>
</dbReference>
<dbReference type="Gene3D" id="3.40.50.10490">
    <property type="entry name" value="Glucose-6-phosphate isomerase like protein, domain 1"/>
    <property type="match status" value="2"/>
</dbReference>
<dbReference type="HAMAP" id="MF_00473">
    <property type="entry name" value="G6P_isomerase"/>
    <property type="match status" value="1"/>
</dbReference>
<dbReference type="InterPro" id="IPR001672">
    <property type="entry name" value="G6P_Isomerase"/>
</dbReference>
<dbReference type="InterPro" id="IPR023096">
    <property type="entry name" value="G6P_Isomerase_C"/>
</dbReference>
<dbReference type="InterPro" id="IPR018189">
    <property type="entry name" value="Phosphoglucose_isomerase_CS"/>
</dbReference>
<dbReference type="InterPro" id="IPR046348">
    <property type="entry name" value="SIS_dom_sf"/>
</dbReference>
<dbReference type="InterPro" id="IPR035476">
    <property type="entry name" value="SIS_PGI_1"/>
</dbReference>
<dbReference type="InterPro" id="IPR035482">
    <property type="entry name" value="SIS_PGI_2"/>
</dbReference>
<dbReference type="NCBIfam" id="NF001211">
    <property type="entry name" value="PRK00179.1"/>
    <property type="match status" value="1"/>
</dbReference>
<dbReference type="PANTHER" id="PTHR11469">
    <property type="entry name" value="GLUCOSE-6-PHOSPHATE ISOMERASE"/>
    <property type="match status" value="1"/>
</dbReference>
<dbReference type="PANTHER" id="PTHR11469:SF1">
    <property type="entry name" value="GLUCOSE-6-PHOSPHATE ISOMERASE"/>
    <property type="match status" value="1"/>
</dbReference>
<dbReference type="Pfam" id="PF00342">
    <property type="entry name" value="PGI"/>
    <property type="match status" value="1"/>
</dbReference>
<dbReference type="PRINTS" id="PR00662">
    <property type="entry name" value="G6PISOMERASE"/>
</dbReference>
<dbReference type="SUPFAM" id="SSF53697">
    <property type="entry name" value="SIS domain"/>
    <property type="match status" value="1"/>
</dbReference>
<dbReference type="PROSITE" id="PS00765">
    <property type="entry name" value="P_GLUCOSE_ISOMERASE_1"/>
    <property type="match status" value="1"/>
</dbReference>
<dbReference type="PROSITE" id="PS00174">
    <property type="entry name" value="P_GLUCOSE_ISOMERASE_2"/>
    <property type="match status" value="1"/>
</dbReference>
<dbReference type="PROSITE" id="PS51463">
    <property type="entry name" value="P_GLUCOSE_ISOMERASE_3"/>
    <property type="match status" value="1"/>
</dbReference>
<reference key="1">
    <citation type="journal article" date="2000" name="Nature">
        <title>Complete DNA sequence of a serogroup A strain of Neisseria meningitidis Z2491.</title>
        <authorList>
            <person name="Parkhill J."/>
            <person name="Achtman M."/>
            <person name="James K.D."/>
            <person name="Bentley S.D."/>
            <person name="Churcher C.M."/>
            <person name="Klee S.R."/>
            <person name="Morelli G."/>
            <person name="Basham D."/>
            <person name="Brown D."/>
            <person name="Chillingworth T."/>
            <person name="Davies R.M."/>
            <person name="Davis P."/>
            <person name="Devlin K."/>
            <person name="Feltwell T."/>
            <person name="Hamlin N."/>
            <person name="Holroyd S."/>
            <person name="Jagels K."/>
            <person name="Leather S."/>
            <person name="Moule S."/>
            <person name="Mungall K.L."/>
            <person name="Quail M.A."/>
            <person name="Rajandream M.A."/>
            <person name="Rutherford K.M."/>
            <person name="Simmonds M."/>
            <person name="Skelton J."/>
            <person name="Whitehead S."/>
            <person name="Spratt B.G."/>
            <person name="Barrell B.G."/>
        </authorList>
    </citation>
    <scope>NUCLEOTIDE SEQUENCE [LARGE SCALE GENOMIC DNA]</scope>
    <source>
        <strain>DSM 15465 / Z2491</strain>
    </source>
</reference>
<sequence>MNAFTRAWYALERHYQDTRHVLLRDRFACEPDRFERMHERLDGMLFDYSKNRLGEDTLQLLCRLAETADLEGKMRALRTGAKVNNSEGRAALHTALRLPDGAGAVYADGRDVLPEIRRELNRALKFAHSLDDGSYQGTTGKRITDFVHIGIGGSDLGPAMCVQALEPFRRHIAVHFAANADPACLDEVLCRLNPETTVFCVASKSFKTPETLLNAEAVKAWYRGAGFSESETGCHFCAVSADTEAAQSFGIAAERVFAMYDWVGGRYSVWSPVGLPVMVAVGGARFRELLAGAHAMDSHFFHTPPRRNIPVLMALIAVWYNNFQHADGQTAVPYSHNLRLLPAWLNQLDMESLGKSRASDGSPAACKTGGIVFGGEGVNCQHAYFQLLHQGTRLIPCDFIVPMTAQGVEDGRSRFTVANAFAQAEALMKGKTLDEARAELADLPEAERERLAPHKEFPGNRPSNSILLERLTPYNLGMLMAAYEHKTFVQGVIWDINPFDQWGVEYGKQLAKTIIGELEGGTSVHDASTEGLMAFYRECRLKGGGAA</sequence>
<feature type="chain" id="PRO_0000180692" description="Glucose-6-phosphate isomerase 2">
    <location>
        <begin position="1"/>
        <end position="547"/>
    </location>
</feature>
<feature type="active site" description="Proton donor" evidence="1">
    <location>
        <position position="351"/>
    </location>
</feature>
<feature type="active site" evidence="1">
    <location>
        <position position="382"/>
    </location>
</feature>
<feature type="active site" evidence="1">
    <location>
        <position position="508"/>
    </location>
</feature>
<name>G6PI2_NEIMA</name>
<accession>Q9JSS6</accession>
<accession>A1ITY1</accession>
<protein>
    <recommendedName>
        <fullName evidence="1">Glucose-6-phosphate isomerase 2</fullName>
        <shortName evidence="1">GPI 2</shortName>
        <ecNumber evidence="1">5.3.1.9</ecNumber>
    </recommendedName>
    <alternativeName>
        <fullName evidence="1">Phosphoglucose isomerase 2</fullName>
        <shortName evidence="1">PGI 2</shortName>
    </alternativeName>
    <alternativeName>
        <fullName evidence="1">Phosphohexose isomerase 2</fullName>
        <shortName evidence="1">PHI 2</shortName>
    </alternativeName>
</protein>
<comment type="function">
    <text evidence="1">Catalyzes the reversible isomerization of glucose-6-phosphate to fructose-6-phosphate.</text>
</comment>
<comment type="catalytic activity">
    <reaction evidence="1">
        <text>alpha-D-glucose 6-phosphate = beta-D-fructose 6-phosphate</text>
        <dbReference type="Rhea" id="RHEA:11816"/>
        <dbReference type="ChEBI" id="CHEBI:57634"/>
        <dbReference type="ChEBI" id="CHEBI:58225"/>
        <dbReference type="EC" id="5.3.1.9"/>
    </reaction>
</comment>
<comment type="pathway">
    <text evidence="1">Carbohydrate biosynthesis; gluconeogenesis.</text>
</comment>
<comment type="pathway">
    <text evidence="1">Carbohydrate degradation; glycolysis; D-glyceraldehyde 3-phosphate and glycerone phosphate from D-glucose: step 2/4.</text>
</comment>
<comment type="subcellular location">
    <subcellularLocation>
        <location evidence="1">Cytoplasm</location>
    </subcellularLocation>
</comment>
<comment type="similarity">
    <text evidence="1 2">Belongs to the GPI family.</text>
</comment>